<name>LPXH_SALSV</name>
<dbReference type="EC" id="3.6.1.54" evidence="1"/>
<dbReference type="EMBL" id="CP001127">
    <property type="protein sequence ID" value="ACF92919.1"/>
    <property type="molecule type" value="Genomic_DNA"/>
</dbReference>
<dbReference type="RefSeq" id="WP_000212282.1">
    <property type="nucleotide sequence ID" value="NC_011094.1"/>
</dbReference>
<dbReference type="SMR" id="B4TN57"/>
<dbReference type="KEGG" id="sew:SeSA_A0580"/>
<dbReference type="HOGENOM" id="CLU_074586_0_0_6"/>
<dbReference type="UniPathway" id="UPA00359">
    <property type="reaction ID" value="UER00480"/>
</dbReference>
<dbReference type="Proteomes" id="UP000001865">
    <property type="component" value="Chromosome"/>
</dbReference>
<dbReference type="GO" id="GO:0005737">
    <property type="term" value="C:cytoplasm"/>
    <property type="evidence" value="ECO:0007669"/>
    <property type="project" value="InterPro"/>
</dbReference>
<dbReference type="GO" id="GO:0019897">
    <property type="term" value="C:extrinsic component of plasma membrane"/>
    <property type="evidence" value="ECO:0007669"/>
    <property type="project" value="UniProtKB-UniRule"/>
</dbReference>
<dbReference type="GO" id="GO:0030145">
    <property type="term" value="F:manganese ion binding"/>
    <property type="evidence" value="ECO:0007669"/>
    <property type="project" value="UniProtKB-UniRule"/>
</dbReference>
<dbReference type="GO" id="GO:0008758">
    <property type="term" value="F:UDP-2,3-diacylglucosamine hydrolase activity"/>
    <property type="evidence" value="ECO:0007669"/>
    <property type="project" value="UniProtKB-UniRule"/>
</dbReference>
<dbReference type="GO" id="GO:0009245">
    <property type="term" value="P:lipid A biosynthetic process"/>
    <property type="evidence" value="ECO:0007669"/>
    <property type="project" value="UniProtKB-UniRule"/>
</dbReference>
<dbReference type="CDD" id="cd07398">
    <property type="entry name" value="MPP_YbbF-LpxH"/>
    <property type="match status" value="1"/>
</dbReference>
<dbReference type="FunFam" id="3.60.21.10:FF:000012">
    <property type="entry name" value="UDP-2,3-diacylglucosamine hydrolase"/>
    <property type="match status" value="1"/>
</dbReference>
<dbReference type="Gene3D" id="3.60.21.10">
    <property type="match status" value="1"/>
</dbReference>
<dbReference type="HAMAP" id="MF_00575">
    <property type="entry name" value="LpxH"/>
    <property type="match status" value="1"/>
</dbReference>
<dbReference type="InterPro" id="IPR004843">
    <property type="entry name" value="Calcineurin-like_PHP_ApaH"/>
</dbReference>
<dbReference type="InterPro" id="IPR043461">
    <property type="entry name" value="LpxH-like"/>
</dbReference>
<dbReference type="InterPro" id="IPR029052">
    <property type="entry name" value="Metallo-depent_PP-like"/>
</dbReference>
<dbReference type="InterPro" id="IPR010138">
    <property type="entry name" value="UDP-diacylglucosamine_Hdrlase"/>
</dbReference>
<dbReference type="NCBIfam" id="TIGR01854">
    <property type="entry name" value="lipid_A_lpxH"/>
    <property type="match status" value="1"/>
</dbReference>
<dbReference type="NCBIfam" id="NF003743">
    <property type="entry name" value="PRK05340.1"/>
    <property type="match status" value="1"/>
</dbReference>
<dbReference type="PANTHER" id="PTHR34990:SF1">
    <property type="entry name" value="UDP-2,3-DIACYLGLUCOSAMINE HYDROLASE"/>
    <property type="match status" value="1"/>
</dbReference>
<dbReference type="PANTHER" id="PTHR34990">
    <property type="entry name" value="UDP-2,3-DIACYLGLUCOSAMINE HYDROLASE-RELATED"/>
    <property type="match status" value="1"/>
</dbReference>
<dbReference type="Pfam" id="PF00149">
    <property type="entry name" value="Metallophos"/>
    <property type="match status" value="1"/>
</dbReference>
<dbReference type="SUPFAM" id="SSF56300">
    <property type="entry name" value="Metallo-dependent phosphatases"/>
    <property type="match status" value="1"/>
</dbReference>
<comment type="function">
    <text evidence="1">Hydrolyzes the pyrophosphate bond of UDP-2,3-diacylglucosamine to yield 2,3-diacylglucosamine 1-phosphate (lipid X) and UMP by catalyzing the attack of water at the alpha-P atom. Involved in the biosynthesis of lipid A, a phosphorylated glycolipid that anchors the lipopolysaccharide to the outer membrane of the cell.</text>
</comment>
<comment type="catalytic activity">
    <reaction evidence="1">
        <text>UDP-2-N,3-O-bis[(3R)-3-hydroxytetradecanoyl]-alpha-D-glucosamine + H2O = 2-N,3-O-bis[(3R)-3-hydroxytetradecanoyl]-alpha-D-glucosaminyl 1-phosphate + UMP + 2 H(+)</text>
        <dbReference type="Rhea" id="RHEA:25213"/>
        <dbReference type="ChEBI" id="CHEBI:15377"/>
        <dbReference type="ChEBI" id="CHEBI:15378"/>
        <dbReference type="ChEBI" id="CHEBI:57865"/>
        <dbReference type="ChEBI" id="CHEBI:57957"/>
        <dbReference type="ChEBI" id="CHEBI:78847"/>
        <dbReference type="EC" id="3.6.1.54"/>
    </reaction>
</comment>
<comment type="cofactor">
    <cofactor evidence="1">
        <name>Mn(2+)</name>
        <dbReference type="ChEBI" id="CHEBI:29035"/>
    </cofactor>
    <text evidence="1">Binds 2 Mn(2+) ions per subunit in a binuclear metal center.</text>
</comment>
<comment type="pathway">
    <text evidence="1">Glycolipid biosynthesis; lipid IV(A) biosynthesis; lipid IV(A) from (3R)-3-hydroxytetradecanoyl-[acyl-carrier-protein] and UDP-N-acetyl-alpha-D-glucosamine: step 4/6.</text>
</comment>
<comment type="subcellular location">
    <subcellularLocation>
        <location evidence="1">Cell inner membrane</location>
        <topology evidence="1">Peripheral membrane protein</topology>
        <orientation evidence="1">Cytoplasmic side</orientation>
    </subcellularLocation>
</comment>
<comment type="similarity">
    <text evidence="1">Belongs to the LpxH family.</text>
</comment>
<accession>B4TN57</accession>
<keyword id="KW-0997">Cell inner membrane</keyword>
<keyword id="KW-1003">Cell membrane</keyword>
<keyword id="KW-0378">Hydrolase</keyword>
<keyword id="KW-0441">Lipid A biosynthesis</keyword>
<keyword id="KW-0444">Lipid biosynthesis</keyword>
<keyword id="KW-0443">Lipid metabolism</keyword>
<keyword id="KW-0464">Manganese</keyword>
<keyword id="KW-0472">Membrane</keyword>
<keyword id="KW-0479">Metal-binding</keyword>
<feature type="chain" id="PRO_1000129537" description="UDP-2,3-diacylglucosamine hydrolase">
    <location>
        <begin position="1"/>
        <end position="240"/>
    </location>
</feature>
<feature type="binding site" evidence="1">
    <location>
        <position position="8"/>
    </location>
    <ligand>
        <name>Mn(2+)</name>
        <dbReference type="ChEBI" id="CHEBI:29035"/>
        <label>1</label>
    </ligand>
</feature>
<feature type="binding site" evidence="1">
    <location>
        <position position="10"/>
    </location>
    <ligand>
        <name>Mn(2+)</name>
        <dbReference type="ChEBI" id="CHEBI:29035"/>
        <label>1</label>
    </ligand>
</feature>
<feature type="binding site" evidence="1">
    <location>
        <position position="41"/>
    </location>
    <ligand>
        <name>Mn(2+)</name>
        <dbReference type="ChEBI" id="CHEBI:29035"/>
        <label>1</label>
    </ligand>
</feature>
<feature type="binding site" evidence="1">
    <location>
        <position position="41"/>
    </location>
    <ligand>
        <name>Mn(2+)</name>
        <dbReference type="ChEBI" id="CHEBI:29035"/>
        <label>2</label>
    </ligand>
</feature>
<feature type="binding site" evidence="1">
    <location>
        <begin position="79"/>
        <end position="80"/>
    </location>
    <ligand>
        <name>substrate</name>
    </ligand>
</feature>
<feature type="binding site" evidence="1">
    <location>
        <position position="79"/>
    </location>
    <ligand>
        <name>Mn(2+)</name>
        <dbReference type="ChEBI" id="CHEBI:29035"/>
        <label>2</label>
    </ligand>
</feature>
<feature type="binding site" evidence="1">
    <location>
        <position position="114"/>
    </location>
    <ligand>
        <name>Mn(2+)</name>
        <dbReference type="ChEBI" id="CHEBI:29035"/>
        <label>2</label>
    </ligand>
</feature>
<feature type="binding site" evidence="1">
    <location>
        <position position="122"/>
    </location>
    <ligand>
        <name>substrate</name>
    </ligand>
</feature>
<feature type="binding site" evidence="1">
    <location>
        <position position="160"/>
    </location>
    <ligand>
        <name>substrate</name>
    </ligand>
</feature>
<feature type="binding site" evidence="1">
    <location>
        <position position="164"/>
    </location>
    <ligand>
        <name>substrate</name>
    </ligand>
</feature>
<feature type="binding site" evidence="1">
    <location>
        <position position="167"/>
    </location>
    <ligand>
        <name>substrate</name>
    </ligand>
</feature>
<feature type="binding site" evidence="1">
    <location>
        <position position="195"/>
    </location>
    <ligand>
        <name>Mn(2+)</name>
        <dbReference type="ChEBI" id="CHEBI:29035"/>
        <label>2</label>
    </ligand>
</feature>
<feature type="binding site" evidence="1">
    <location>
        <position position="195"/>
    </location>
    <ligand>
        <name>substrate</name>
    </ligand>
</feature>
<feature type="binding site" evidence="1">
    <location>
        <position position="197"/>
    </location>
    <ligand>
        <name>Mn(2+)</name>
        <dbReference type="ChEBI" id="CHEBI:29035"/>
        <label>1</label>
    </ligand>
</feature>
<sequence length="240" mass="26978">MATLFIADLHLQTEEPAIVAGFLRFLAVEARQADALYILGDLFEAWIGDDDPNPLHREMAVAIKSLVDSGVPCFFIHGNRDFLIGKRFARESGMILLPQEKVLDLYGRNVLIMHGDTLCTDDAGYQAFRAKVHNPWIQRLFLTLPLFIRRRIAARMRAGSKAANSSKSLDIMDVNAQTVVAEMEKHRVQWLVHGHTHRPAVHELSANDQPAFRVVLGAWHHEGSMVKVTPDNVELIAFPL</sequence>
<reference key="1">
    <citation type="journal article" date="2011" name="J. Bacteriol.">
        <title>Comparative genomics of 28 Salmonella enterica isolates: evidence for CRISPR-mediated adaptive sublineage evolution.</title>
        <authorList>
            <person name="Fricke W.F."/>
            <person name="Mammel M.K."/>
            <person name="McDermott P.F."/>
            <person name="Tartera C."/>
            <person name="White D.G."/>
            <person name="Leclerc J.E."/>
            <person name="Ravel J."/>
            <person name="Cebula T.A."/>
        </authorList>
    </citation>
    <scope>NUCLEOTIDE SEQUENCE [LARGE SCALE GENOMIC DNA]</scope>
    <source>
        <strain>CVM19633</strain>
    </source>
</reference>
<proteinExistence type="inferred from homology"/>
<evidence type="ECO:0000255" key="1">
    <source>
        <dbReference type="HAMAP-Rule" id="MF_00575"/>
    </source>
</evidence>
<protein>
    <recommendedName>
        <fullName evidence="1">UDP-2,3-diacylglucosamine hydrolase</fullName>
        <ecNumber evidence="1">3.6.1.54</ecNumber>
    </recommendedName>
    <alternativeName>
        <fullName evidence="1">UDP-2,3-diacylglucosamine diphosphatase</fullName>
    </alternativeName>
</protein>
<gene>
    <name evidence="1" type="primary">lpxH</name>
    <name type="ordered locus">SeSA_A0580</name>
</gene>
<organism>
    <name type="scientific">Salmonella schwarzengrund (strain CVM19633)</name>
    <dbReference type="NCBI Taxonomy" id="439843"/>
    <lineage>
        <taxon>Bacteria</taxon>
        <taxon>Pseudomonadati</taxon>
        <taxon>Pseudomonadota</taxon>
        <taxon>Gammaproteobacteria</taxon>
        <taxon>Enterobacterales</taxon>
        <taxon>Enterobacteriaceae</taxon>
        <taxon>Salmonella</taxon>
    </lineage>
</organism>